<name>PDE6C_CHICK</name>
<proteinExistence type="evidence at protein level"/>
<comment type="function">
    <text evidence="2">As cone-specific cGMP phosphodiesterase, it plays an essential role in light detection and cone phototransduction by rapidly decreasing intracellular levels of cGMP.</text>
</comment>
<comment type="catalytic activity">
    <reaction evidence="2">
        <text>3',5'-cyclic GMP + H2O = GMP + H(+)</text>
        <dbReference type="Rhea" id="RHEA:16957"/>
        <dbReference type="ChEBI" id="CHEBI:15377"/>
        <dbReference type="ChEBI" id="CHEBI:15378"/>
        <dbReference type="ChEBI" id="CHEBI:57746"/>
        <dbReference type="ChEBI" id="CHEBI:58115"/>
        <dbReference type="EC" id="3.1.4.35"/>
    </reaction>
</comment>
<comment type="cofactor">
    <cofactor evidence="1">
        <name>a divalent metal cation</name>
        <dbReference type="ChEBI" id="CHEBI:60240"/>
    </cofactor>
    <text evidence="1">Binds 2 divalent metal cations per subunit. Site 1 may preferentially bind zinc ions, while site 2 has a preference for magnesium and/or manganese ions.</text>
</comment>
<comment type="subunit">
    <text evidence="6">Composed of two alpha' subunits that are associated with 3 smaller proteins of 11, 13, and 15 kDa.</text>
</comment>
<comment type="subcellular location">
    <subcellularLocation>
        <location evidence="7">Cell membrane</location>
        <topology evidence="7">Lipid-anchor</topology>
        <orientation evidence="7">Cytoplasmic side</orientation>
    </subcellularLocation>
</comment>
<comment type="similarity">
    <text evidence="7">Belongs to the cyclic nucleotide phosphodiesterase family.</text>
</comment>
<accession>P52731</accession>
<dbReference type="EC" id="3.1.4.35" evidence="2"/>
<dbReference type="EMBL" id="L29233">
    <property type="protein sequence ID" value="AAC42223.1"/>
    <property type="molecule type" value="mRNA"/>
</dbReference>
<dbReference type="PIR" id="I50186">
    <property type="entry name" value="I50186"/>
</dbReference>
<dbReference type="RefSeq" id="NP_990317.1">
    <property type="nucleotide sequence ID" value="NM_204986.1"/>
</dbReference>
<dbReference type="PDB" id="3DBA">
    <property type="method" value="X-ray"/>
    <property type="resolution" value="2.57 A"/>
    <property type="chains" value="A/B=55-225"/>
</dbReference>
<dbReference type="PDB" id="3JBQ">
    <property type="method" value="EM"/>
    <property type="resolution" value="11.00 A"/>
    <property type="chains" value="1/2=55-228"/>
</dbReference>
<dbReference type="PDB" id="6X88">
    <property type="method" value="X-ray"/>
    <property type="resolution" value="3.20 A"/>
    <property type="chains" value="A/B=1-862"/>
</dbReference>
<dbReference type="PDBsum" id="3DBA"/>
<dbReference type="PDBsum" id="3JBQ"/>
<dbReference type="PDBsum" id="6X88"/>
<dbReference type="SMR" id="P52731"/>
<dbReference type="FunCoup" id="P52731">
    <property type="interactions" value="80"/>
</dbReference>
<dbReference type="STRING" id="9031.ENSGALP00000010688"/>
<dbReference type="GlyGen" id="P52731">
    <property type="glycosylation" value="1 site"/>
</dbReference>
<dbReference type="PaxDb" id="9031-ENSGALP00000010688"/>
<dbReference type="GeneID" id="395834"/>
<dbReference type="KEGG" id="gga:395834"/>
<dbReference type="CTD" id="5146"/>
<dbReference type="VEuPathDB" id="HostDB:geneid_395834"/>
<dbReference type="eggNOG" id="KOG3689">
    <property type="taxonomic scope" value="Eukaryota"/>
</dbReference>
<dbReference type="InParanoid" id="P52731"/>
<dbReference type="OMA" id="LICNMMN"/>
<dbReference type="OrthoDB" id="546632at2759"/>
<dbReference type="PhylomeDB" id="P52731"/>
<dbReference type="BRENDA" id="3.1.4.35">
    <property type="organism ID" value="1306"/>
</dbReference>
<dbReference type="EvolutionaryTrace" id="P52731"/>
<dbReference type="PRO" id="PR:P52731"/>
<dbReference type="Proteomes" id="UP000000539">
    <property type="component" value="Unassembled WGS sequence"/>
</dbReference>
<dbReference type="GO" id="GO:0005886">
    <property type="term" value="C:plasma membrane"/>
    <property type="evidence" value="ECO:0007669"/>
    <property type="project" value="UniProtKB-SubCell"/>
</dbReference>
<dbReference type="GO" id="GO:0004115">
    <property type="term" value="F:3',5'-cyclic-AMP phosphodiesterase activity"/>
    <property type="evidence" value="ECO:0000318"/>
    <property type="project" value="GO_Central"/>
</dbReference>
<dbReference type="GO" id="GO:0047555">
    <property type="term" value="F:3',5'-cyclic-GMP phosphodiesterase activity"/>
    <property type="evidence" value="ECO:0000318"/>
    <property type="project" value="GO_Central"/>
</dbReference>
<dbReference type="GO" id="GO:0030553">
    <property type="term" value="F:cGMP binding"/>
    <property type="evidence" value="ECO:0007669"/>
    <property type="project" value="UniProtKB-KW"/>
</dbReference>
<dbReference type="GO" id="GO:0046872">
    <property type="term" value="F:metal ion binding"/>
    <property type="evidence" value="ECO:0007669"/>
    <property type="project" value="UniProtKB-KW"/>
</dbReference>
<dbReference type="GO" id="GO:0019933">
    <property type="term" value="P:cAMP-mediated signaling"/>
    <property type="evidence" value="ECO:0000318"/>
    <property type="project" value="GO_Central"/>
</dbReference>
<dbReference type="GO" id="GO:0007601">
    <property type="term" value="P:visual perception"/>
    <property type="evidence" value="ECO:0000318"/>
    <property type="project" value="GO_Central"/>
</dbReference>
<dbReference type="CDD" id="cd00077">
    <property type="entry name" value="HDc"/>
    <property type="match status" value="1"/>
</dbReference>
<dbReference type="FunFam" id="1.10.1300.10:FF:000005">
    <property type="entry name" value="Phosphodiesterase"/>
    <property type="match status" value="1"/>
</dbReference>
<dbReference type="FunFam" id="3.30.450.40:FF:000001">
    <property type="entry name" value="Phosphodiesterase"/>
    <property type="match status" value="1"/>
</dbReference>
<dbReference type="FunFam" id="3.30.450.40:FF:000010">
    <property type="entry name" value="Phosphodiesterase"/>
    <property type="match status" value="1"/>
</dbReference>
<dbReference type="Gene3D" id="3.30.450.40">
    <property type="match status" value="2"/>
</dbReference>
<dbReference type="Gene3D" id="1.10.1300.10">
    <property type="entry name" value="3'5'-cyclic nucleotide phosphodiesterase, catalytic domain"/>
    <property type="match status" value="1"/>
</dbReference>
<dbReference type="InterPro" id="IPR003018">
    <property type="entry name" value="GAF"/>
</dbReference>
<dbReference type="InterPro" id="IPR029016">
    <property type="entry name" value="GAF-like_dom_sf"/>
</dbReference>
<dbReference type="InterPro" id="IPR003607">
    <property type="entry name" value="HD/PDEase_dom"/>
</dbReference>
<dbReference type="InterPro" id="IPR023088">
    <property type="entry name" value="PDEase"/>
</dbReference>
<dbReference type="InterPro" id="IPR002073">
    <property type="entry name" value="PDEase_catalytic_dom"/>
</dbReference>
<dbReference type="InterPro" id="IPR036971">
    <property type="entry name" value="PDEase_catalytic_dom_sf"/>
</dbReference>
<dbReference type="InterPro" id="IPR023174">
    <property type="entry name" value="PDEase_CS"/>
</dbReference>
<dbReference type="PANTHER" id="PTHR11347">
    <property type="entry name" value="CYCLIC NUCLEOTIDE PHOSPHODIESTERASE"/>
    <property type="match status" value="1"/>
</dbReference>
<dbReference type="Pfam" id="PF01590">
    <property type="entry name" value="GAF"/>
    <property type="match status" value="2"/>
</dbReference>
<dbReference type="Pfam" id="PF00233">
    <property type="entry name" value="PDEase_I"/>
    <property type="match status" value="1"/>
</dbReference>
<dbReference type="PRINTS" id="PR00387">
    <property type="entry name" value="PDIESTERASE1"/>
</dbReference>
<dbReference type="SMART" id="SM00065">
    <property type="entry name" value="GAF"/>
    <property type="match status" value="2"/>
</dbReference>
<dbReference type="SMART" id="SM00471">
    <property type="entry name" value="HDc"/>
    <property type="match status" value="1"/>
</dbReference>
<dbReference type="SUPFAM" id="SSF55781">
    <property type="entry name" value="GAF domain-like"/>
    <property type="match status" value="2"/>
</dbReference>
<dbReference type="SUPFAM" id="SSF109604">
    <property type="entry name" value="HD-domain/PDEase-like"/>
    <property type="match status" value="1"/>
</dbReference>
<dbReference type="PROSITE" id="PS00126">
    <property type="entry name" value="PDEASE_I_1"/>
    <property type="match status" value="1"/>
</dbReference>
<dbReference type="PROSITE" id="PS51845">
    <property type="entry name" value="PDEASE_I_2"/>
    <property type="match status" value="1"/>
</dbReference>
<keyword id="KW-0002">3D-structure</keyword>
<keyword id="KW-1003">Cell membrane</keyword>
<keyword id="KW-0140">cGMP</keyword>
<keyword id="KW-0142">cGMP-binding</keyword>
<keyword id="KW-0378">Hydrolase</keyword>
<keyword id="KW-0449">Lipoprotein</keyword>
<keyword id="KW-0472">Membrane</keyword>
<keyword id="KW-0479">Metal-binding</keyword>
<keyword id="KW-0488">Methylation</keyword>
<keyword id="KW-0547">Nucleotide-binding</keyword>
<keyword id="KW-0636">Prenylation</keyword>
<keyword id="KW-1185">Reference proteome</keyword>
<keyword id="KW-0677">Repeat</keyword>
<keyword id="KW-0716">Sensory transduction</keyword>
<keyword id="KW-0844">Vision</keyword>
<gene>
    <name type="primary">PDE6C</name>
</gene>
<reference key="1">
    <citation type="journal article" date="1994" name="Exp. Eye Res.">
        <title>Molecular characterization of the alpha'-subunit of cone photoreceptor cGMP phosphodiesterase in normal and rd chicken.</title>
        <authorList>
            <person name="Semple-Rowland S.L."/>
            <person name="Green D.A."/>
        </authorList>
    </citation>
    <scope>NUCLEOTIDE SEQUENCE [MRNA]</scope>
    <source>
        <strain>Rhode Island red</strain>
        <tissue>Retina</tissue>
    </source>
</reference>
<reference key="2">
    <citation type="journal article" date="2008" name="J. Biol. Chem.">
        <title>The structure of the GAF A domain from phosphodiesterase 6C reveals determinants of cGMP binding, a conserved binding surface, and a large cGMP-dependent conformational change.</title>
        <authorList>
            <person name="Martinez S.E."/>
            <person name="Heikaus C.C."/>
            <person name="Klevit R.E."/>
            <person name="Beavo J.A."/>
        </authorList>
    </citation>
    <scope>X-RAY CRYSTALLOGRAPHY (2.57 ANGSTROMS) OF 55-225 IN COMPLEX WITH CGMP</scope>
</reference>
<organism>
    <name type="scientific">Gallus gallus</name>
    <name type="common">Chicken</name>
    <dbReference type="NCBI Taxonomy" id="9031"/>
    <lineage>
        <taxon>Eukaryota</taxon>
        <taxon>Metazoa</taxon>
        <taxon>Chordata</taxon>
        <taxon>Craniata</taxon>
        <taxon>Vertebrata</taxon>
        <taxon>Euteleostomi</taxon>
        <taxon>Archelosauria</taxon>
        <taxon>Archosauria</taxon>
        <taxon>Dinosauria</taxon>
        <taxon>Saurischia</taxon>
        <taxon>Theropoda</taxon>
        <taxon>Coelurosauria</taxon>
        <taxon>Aves</taxon>
        <taxon>Neognathae</taxon>
        <taxon>Galloanserae</taxon>
        <taxon>Galliformes</taxon>
        <taxon>Phasianidae</taxon>
        <taxon>Phasianinae</taxon>
        <taxon>Gallus</taxon>
    </lineage>
</organism>
<evidence type="ECO:0000250" key="1"/>
<evidence type="ECO:0000250" key="2">
    <source>
        <dbReference type="UniProtKB" id="P51160"/>
    </source>
</evidence>
<evidence type="ECO:0000255" key="3"/>
<evidence type="ECO:0000255" key="4">
    <source>
        <dbReference type="PROSITE-ProRule" id="PRU01192"/>
    </source>
</evidence>
<evidence type="ECO:0000256" key="5">
    <source>
        <dbReference type="SAM" id="MobiDB-lite"/>
    </source>
</evidence>
<evidence type="ECO:0000269" key="6">
    <source>
    </source>
</evidence>
<evidence type="ECO:0000305" key="7"/>
<evidence type="ECO:0007829" key="8">
    <source>
        <dbReference type="PDB" id="3DBA"/>
    </source>
</evidence>
<evidence type="ECO:0007829" key="9">
    <source>
        <dbReference type="PDB" id="6X88"/>
    </source>
</evidence>
<feature type="chain" id="PRO_0000198832" description="Cone cGMP-specific 3',5'-cyclic phosphodiesterase subunit alpha'">
    <location>
        <begin position="1"/>
        <end position="859"/>
    </location>
</feature>
<feature type="propeptide" id="PRO_0000370790" description="Removed in mature form" evidence="3">
    <location>
        <begin position="860"/>
        <end position="862"/>
    </location>
</feature>
<feature type="domain" description="GAF 1">
    <location>
        <begin position="75"/>
        <end position="224"/>
    </location>
</feature>
<feature type="domain" description="GAF 2">
    <location>
        <begin position="256"/>
        <end position="433"/>
    </location>
</feature>
<feature type="domain" description="PDEase" evidence="4">
    <location>
        <begin position="486"/>
        <end position="819"/>
    </location>
</feature>
<feature type="region of interest" description="Disordered" evidence="5">
    <location>
        <begin position="830"/>
        <end position="862"/>
    </location>
</feature>
<feature type="compositionally biased region" description="Basic and acidic residues" evidence="5">
    <location>
        <begin position="830"/>
        <end position="842"/>
    </location>
</feature>
<feature type="active site" description="Proton donor" evidence="1">
    <location>
        <position position="562"/>
    </location>
</feature>
<feature type="binding site" evidence="6">
    <location>
        <position position="97"/>
    </location>
    <ligand>
        <name>3',5'-cyclic GMP</name>
        <dbReference type="ChEBI" id="CHEBI:57746"/>
    </ligand>
</feature>
<feature type="binding site" evidence="6">
    <location>
        <position position="116"/>
    </location>
    <ligand>
        <name>3',5'-cyclic GMP</name>
        <dbReference type="ChEBI" id="CHEBI:57746"/>
    </ligand>
</feature>
<feature type="binding site" evidence="6">
    <location>
        <begin position="169"/>
        <end position="172"/>
    </location>
    <ligand>
        <name>3',5'-cyclic GMP</name>
        <dbReference type="ChEBI" id="CHEBI:57746"/>
    </ligand>
</feature>
<feature type="binding site" evidence="6">
    <location>
        <position position="176"/>
    </location>
    <ligand>
        <name>3',5'-cyclic GMP</name>
        <dbReference type="ChEBI" id="CHEBI:57746"/>
    </ligand>
</feature>
<feature type="binding site" evidence="1">
    <location>
        <position position="566"/>
    </location>
    <ligand>
        <name>a divalent metal cation</name>
        <dbReference type="ChEBI" id="CHEBI:60240"/>
        <label>1</label>
    </ligand>
</feature>
<feature type="binding site" evidence="1">
    <location>
        <position position="602"/>
    </location>
    <ligand>
        <name>a divalent metal cation</name>
        <dbReference type="ChEBI" id="CHEBI:60240"/>
        <label>1</label>
    </ligand>
</feature>
<feature type="binding site" evidence="1">
    <location>
        <position position="603"/>
    </location>
    <ligand>
        <name>a divalent metal cation</name>
        <dbReference type="ChEBI" id="CHEBI:60240"/>
        <label>1</label>
    </ligand>
</feature>
<feature type="binding site" evidence="1">
    <location>
        <position position="603"/>
    </location>
    <ligand>
        <name>a divalent metal cation</name>
        <dbReference type="ChEBI" id="CHEBI:60240"/>
        <label>2</label>
    </ligand>
</feature>
<feature type="binding site" evidence="1">
    <location>
        <position position="723"/>
    </location>
    <ligand>
        <name>a divalent metal cation</name>
        <dbReference type="ChEBI" id="CHEBI:60240"/>
        <label>1</label>
    </ligand>
</feature>
<feature type="modified residue" description="Cysteine methyl ester" evidence="3">
    <location>
        <position position="859"/>
    </location>
</feature>
<feature type="lipid moiety-binding region" description="S-geranylgeranyl cysteine" evidence="1">
    <location>
        <position position="859"/>
    </location>
</feature>
<feature type="helix" evidence="8">
    <location>
        <begin position="56"/>
        <end position="66"/>
    </location>
</feature>
<feature type="strand" evidence="8">
    <location>
        <begin position="71"/>
        <end position="74"/>
    </location>
</feature>
<feature type="helix" evidence="8">
    <location>
        <begin position="75"/>
        <end position="91"/>
    </location>
</feature>
<feature type="strand" evidence="8">
    <location>
        <begin position="93"/>
        <end position="104"/>
    </location>
</feature>
<feature type="strand" evidence="8">
    <location>
        <begin position="107"/>
        <end position="117"/>
    </location>
</feature>
<feature type="helix" evidence="8">
    <location>
        <begin position="123"/>
        <end position="126"/>
    </location>
</feature>
<feature type="helix" evidence="8">
    <location>
        <begin position="130"/>
        <end position="132"/>
    </location>
</feature>
<feature type="strand" evidence="9">
    <location>
        <begin position="138"/>
        <end position="141"/>
    </location>
</feature>
<feature type="helix" evidence="8">
    <location>
        <begin position="142"/>
        <end position="149"/>
    </location>
</feature>
<feature type="strand" evidence="8">
    <location>
        <begin position="153"/>
        <end position="156"/>
    </location>
</feature>
<feature type="helix" evidence="8">
    <location>
        <begin position="158"/>
        <end position="160"/>
    </location>
</feature>
<feature type="helix" evidence="8">
    <location>
        <begin position="167"/>
        <end position="172"/>
    </location>
</feature>
<feature type="strand" evidence="8">
    <location>
        <begin position="179"/>
        <end position="186"/>
    </location>
</feature>
<feature type="strand" evidence="8">
    <location>
        <begin position="189"/>
        <end position="204"/>
    </location>
</feature>
<feature type="helix" evidence="8">
    <location>
        <begin position="207"/>
        <end position="223"/>
    </location>
</feature>
<feature type="helix" evidence="9">
    <location>
        <begin position="257"/>
        <end position="267"/>
    </location>
</feature>
<feature type="helix" evidence="9">
    <location>
        <begin position="269"/>
        <end position="272"/>
    </location>
</feature>
<feature type="strand" evidence="9">
    <location>
        <begin position="274"/>
        <end position="282"/>
    </location>
</feature>
<feature type="strand" evidence="9">
    <location>
        <begin position="317"/>
        <end position="324"/>
    </location>
</feature>
<feature type="strand" evidence="9">
    <location>
        <begin position="326"/>
        <end position="328"/>
    </location>
</feature>
<feature type="helix" evidence="9">
    <location>
        <begin position="342"/>
        <end position="345"/>
    </location>
</feature>
<feature type="helix" evidence="9">
    <location>
        <begin position="348"/>
        <end position="354"/>
    </location>
</feature>
<feature type="strand" evidence="9">
    <location>
        <begin position="387"/>
        <end position="393"/>
    </location>
</feature>
<feature type="strand" evidence="9">
    <location>
        <begin position="399"/>
        <end position="411"/>
    </location>
</feature>
<feature type="helix" evidence="9">
    <location>
        <begin position="416"/>
        <end position="446"/>
    </location>
</feature>
<feature type="turn" evidence="9">
    <location>
        <begin position="447"/>
        <end position="452"/>
    </location>
</feature>
<protein>
    <recommendedName>
        <fullName>Cone cGMP-specific 3',5'-cyclic phosphodiesterase subunit alpha'</fullName>
        <ecNumber evidence="2">3.1.4.35</ecNumber>
    </recommendedName>
    <alternativeName>
        <fullName>cGMP phosphodiesterase 6C</fullName>
    </alternativeName>
</protein>
<sequence length="862" mass="100009">MGEVNKDAVEKYLENNPQFAKEYFDRKMRAEVLGSIFQVSPGDVKEGVSFKDMSRLEECNILFELLTEIQDEAGSMEKIVHKTLQRLSQLLARDRCSMFICRSRNGIPEVATRLLNVTPTSKFEDNLVNPDKETVFPLDIGIAGWVAHTKKFFNIPDVKKNNHFSDYLDKKTGYTTVNMMAIPITQGKEVLAVVMALNKLNASEFSKEDEEVFKKYLNFISLVLRNHHTSYLYNIESRRSQMLLWSANKVFEELTDIERQFHKALYTIRMYLNCERYSVGLLDMTKEKEFYDEWPIRLGEAEPYKGPKTPDGREVNFYKIIDYILHGKEEIKVIPTPPADHWCLISGLPTYVAENGFICNMMNAPADEYFTFQKGPVDETGWVIKNVLSLPIVNKKEEIVGVATFYNRKDGKPFDEYDEQIIETLTQFLGWSVLNTDTYDKMNKLENRKDIAQEMLMYQTKATPTEVESILKYKEKLNVKSIEECDEKDLIRILKEELPDPKDLELYEFRFSDFPVTEHGLITCGIRLFFEINVVEKFKVPAEVLTRWMYTVRKGYRDITYHNWRHGFNVGQTMFTLLMTGRIKKYYTDLEAFAMVAAAFCHDIDHRGTNNLYQMKSAAPLAKLHGSSILERHHLEYSKTLLQDESLNIFQNLNKRQFETVLHLFEVAIIATDLALYFKKRTMFQKIVDAIEKMETEEEAIKYISIDPTKKEVIMAMMMTGCDLSAITKPWEVQSKVALMVANEFWEQGDLERTVLQQQPIPMMDRNKGDELPKLQVGFIDFVCTFVYKEFSRFHKEITPMFDGLQNNRVEWKTRADEYEEKMKVIEEQKKKEEEAAAKKAENAAGGGGGGEDGKSKTCIVL</sequence>